<name>PIAS2_HUMAN</name>
<organism>
    <name type="scientific">Homo sapiens</name>
    <name type="common">Human</name>
    <dbReference type="NCBI Taxonomy" id="9606"/>
    <lineage>
        <taxon>Eukaryota</taxon>
        <taxon>Metazoa</taxon>
        <taxon>Chordata</taxon>
        <taxon>Craniata</taxon>
        <taxon>Vertebrata</taxon>
        <taxon>Euteleostomi</taxon>
        <taxon>Mammalia</taxon>
        <taxon>Eutheria</taxon>
        <taxon>Euarchontoglires</taxon>
        <taxon>Primates</taxon>
        <taxon>Haplorrhini</taxon>
        <taxon>Catarrhini</taxon>
        <taxon>Hominidae</taxon>
        <taxon>Homo</taxon>
    </lineage>
</organism>
<evidence type="ECO:0000250" key="1"/>
<evidence type="ECO:0000250" key="2">
    <source>
        <dbReference type="UniProtKB" id="Q8C5D8"/>
    </source>
</evidence>
<evidence type="ECO:0000255" key="3">
    <source>
        <dbReference type="PROSITE-ProRule" id="PRU00186"/>
    </source>
</evidence>
<evidence type="ECO:0000255" key="4">
    <source>
        <dbReference type="PROSITE-ProRule" id="PRU00452"/>
    </source>
</evidence>
<evidence type="ECO:0000255" key="5">
    <source>
        <dbReference type="PROSITE-ProRule" id="PRU00799"/>
    </source>
</evidence>
<evidence type="ECO:0000256" key="6">
    <source>
        <dbReference type="SAM" id="MobiDB-lite"/>
    </source>
</evidence>
<evidence type="ECO:0000269" key="7">
    <source>
    </source>
</evidence>
<evidence type="ECO:0000269" key="8">
    <source>
    </source>
</evidence>
<evidence type="ECO:0000269" key="9">
    <source>
    </source>
</evidence>
<evidence type="ECO:0000269" key="10">
    <source>
    </source>
</evidence>
<evidence type="ECO:0000269" key="11">
    <source>
    </source>
</evidence>
<evidence type="ECO:0000269" key="12">
    <source>
    </source>
</evidence>
<evidence type="ECO:0000269" key="13">
    <source>
    </source>
</evidence>
<evidence type="ECO:0000269" key="14">
    <source>
    </source>
</evidence>
<evidence type="ECO:0000269" key="15">
    <source>
    </source>
</evidence>
<evidence type="ECO:0000269" key="16">
    <source>
    </source>
</evidence>
<evidence type="ECO:0000269" key="17">
    <source>
    </source>
</evidence>
<evidence type="ECO:0000269" key="18">
    <source>
    </source>
</evidence>
<evidence type="ECO:0000269" key="19">
    <source>
    </source>
</evidence>
<evidence type="ECO:0000269" key="20">
    <source>
    </source>
</evidence>
<evidence type="ECO:0000269" key="21">
    <source>
    </source>
</evidence>
<evidence type="ECO:0000269" key="22">
    <source>
    </source>
</evidence>
<evidence type="ECO:0000269" key="23">
    <source>
    </source>
</evidence>
<evidence type="ECO:0000303" key="24">
    <source>
    </source>
</evidence>
<evidence type="ECO:0000303" key="25">
    <source>
    </source>
</evidence>
<evidence type="ECO:0000303" key="26">
    <source>
    </source>
</evidence>
<evidence type="ECO:0000305" key="27"/>
<evidence type="ECO:0007744" key="28">
    <source>
    </source>
</evidence>
<evidence type="ECO:0007744" key="29">
    <source>
    </source>
</evidence>
<evidence type="ECO:0007744" key="30">
    <source>
    </source>
</evidence>
<evidence type="ECO:0007744" key="31">
    <source>
    </source>
</evidence>
<evidence type="ECO:0007744" key="32">
    <source>
    </source>
</evidence>
<evidence type="ECO:0007829" key="33">
    <source>
        <dbReference type="PDB" id="2ASQ"/>
    </source>
</evidence>
<evidence type="ECO:0007829" key="34">
    <source>
        <dbReference type="PDB" id="4FO9"/>
    </source>
</evidence>
<feature type="chain" id="PRO_0000218976" description="E3 SUMO-protein ligase PIAS2">
    <location>
        <begin position="1"/>
        <end position="621"/>
    </location>
</feature>
<feature type="domain" description="SAP" evidence="3">
    <location>
        <begin position="11"/>
        <end position="45"/>
    </location>
</feature>
<feature type="domain" description="PINIT" evidence="5">
    <location>
        <begin position="134"/>
        <end position="299"/>
    </location>
</feature>
<feature type="zinc finger region" description="SP-RING-type" evidence="4">
    <location>
        <begin position="331"/>
        <end position="412"/>
    </location>
</feature>
<feature type="region of interest" description="SUMO1-binding">
    <location>
        <begin position="467"/>
        <end position="473"/>
    </location>
</feature>
<feature type="region of interest" description="Disordered" evidence="6">
    <location>
        <begin position="579"/>
        <end position="621"/>
    </location>
</feature>
<feature type="short sequence motif" description="LXXLL motif">
    <location>
        <begin position="19"/>
        <end position="23"/>
    </location>
</feature>
<feature type="short sequence motif" description="Nuclear localization signal" evidence="1">
    <location>
        <begin position="484"/>
        <end position="492"/>
    </location>
</feature>
<feature type="compositionally biased region" description="Low complexity" evidence="6">
    <location>
        <begin position="579"/>
        <end position="610"/>
    </location>
</feature>
<feature type="binding site" evidence="4">
    <location>
        <position position="362"/>
    </location>
    <ligand>
        <name>Zn(2+)</name>
        <dbReference type="ChEBI" id="CHEBI:29105"/>
    </ligand>
</feature>
<feature type="binding site" evidence="4">
    <location>
        <position position="364"/>
    </location>
    <ligand>
        <name>Zn(2+)</name>
        <dbReference type="ChEBI" id="CHEBI:29105"/>
    </ligand>
</feature>
<feature type="binding site" evidence="4">
    <location>
        <position position="385"/>
    </location>
    <ligand>
        <name>Zn(2+)</name>
        <dbReference type="ChEBI" id="CHEBI:29105"/>
    </ligand>
</feature>
<feature type="binding site" evidence="4">
    <location>
        <position position="388"/>
    </location>
    <ligand>
        <name>Zn(2+)</name>
        <dbReference type="ChEBI" id="CHEBI:29105"/>
    </ligand>
</feature>
<feature type="modified residue" description="Phosphoserine" evidence="28">
    <location>
        <position position="476"/>
    </location>
</feature>
<feature type="modified residue" description="Phosphoserine" evidence="28">
    <location>
        <position position="477"/>
    </location>
</feature>
<feature type="modified residue" description="Phosphoserine" evidence="28">
    <location>
        <position position="478"/>
    </location>
</feature>
<feature type="modified residue" description="Phosphoserine" evidence="2">
    <location>
        <position position="499"/>
    </location>
</feature>
<feature type="cross-link" description="Glycyl lysine isopeptide (Lys-Gly) (interchain with G-Cter in SUMO2)" evidence="32">
    <location>
        <position position="46"/>
    </location>
</feature>
<feature type="cross-link" description="Glycyl lysine isopeptide (Lys-Gly) (interchain with G-Cter in SUMO2)" evidence="29 30 31 32">
    <location>
        <position position="249"/>
    </location>
</feature>
<feature type="cross-link" description="Glycyl lysine isopeptide (Lys-Gly) (interchain with G-Cter in SUMO2)" evidence="31 32">
    <location>
        <position position="430"/>
    </location>
</feature>
<feature type="cross-link" description="Glycyl lysine isopeptide (Lys-Gly) (interchain with G-Cter in SUMO2)" evidence="32">
    <location>
        <position position="435"/>
    </location>
</feature>
<feature type="cross-link" description="Glycyl lysine isopeptide (Lys-Gly) (interchain with G-Cter in SUMO2)" evidence="29 31 32">
    <location>
        <position position="443"/>
    </location>
</feature>
<feature type="cross-link" description="Glycyl lysine isopeptide (Lys-Gly) (interchain with G-Cter in SUMO2)" evidence="32">
    <location>
        <position position="452"/>
    </location>
</feature>
<feature type="cross-link" description="Glycyl lysine isopeptide (Lys-Gly) (interchain with G-Cter in SUMO2)" evidence="31 32">
    <location>
        <position position="489"/>
    </location>
</feature>
<feature type="cross-link" description="Glycyl lysine isopeptide (Lys-Gly) (interchain with G-Cter in SUMO2)" evidence="32">
    <location>
        <position position="502"/>
    </location>
</feature>
<feature type="splice variant" id="VSP_012196" description="In isoform 3." evidence="24">
    <original>MADFEELR</original>
    <variation>MNAGKQLQRTLH</variation>
    <location>
        <begin position="1"/>
        <end position="8"/>
    </location>
</feature>
<feature type="splice variant" id="VSP_012197" description="In isoform 3." evidence="24">
    <location>
        <begin position="402"/>
        <end position="621"/>
    </location>
</feature>
<feature type="splice variant" id="VSP_050008" description="In isoform PIAS2-alpha." evidence="25 26">
    <original>LDFLSLIPVDPQYCPPMFLDSL</original>
    <variation>EQRRNDINNELKLGTSSDTVQQ</variation>
    <location>
        <begin position="551"/>
        <end position="572"/>
    </location>
</feature>
<feature type="splice variant" id="VSP_050009" description="In isoform PIAS2-alpha." evidence="25 26">
    <location>
        <begin position="573"/>
        <end position="621"/>
    </location>
</feature>
<feature type="sequence variant" id="VAR_056693" description="In dbSNP:rs16940108.">
    <original>V</original>
    <variation>A</variation>
    <location>
        <position position="207"/>
    </location>
</feature>
<feature type="mutagenesis site" description="Loss of MDM2 and TP53 sumoylation and of autosumoylation; no loss of JUN- and TP53-binding." evidence="10 12">
    <original>C</original>
    <variation>S</variation>
    <variation>A</variation>
    <location>
        <position position="362"/>
    </location>
</feature>
<feature type="mutagenesis site" description="Reduces affinity for SUMO1." evidence="18">
    <original>V</original>
    <variation>A</variation>
    <location>
        <position position="467"/>
    </location>
</feature>
<feature type="mutagenesis site" description="Abolishes binding to SUMO1." evidence="18">
    <original>V</original>
    <variation>A</variation>
    <location>
        <position position="469"/>
    </location>
</feature>
<feature type="mutagenesis site" description="Abolishes binding to SUMO1." evidence="18">
    <original>I</original>
    <variation>A</variation>
    <location>
        <position position="470"/>
    </location>
</feature>
<feature type="mutagenesis site" description="Abolishes binding to SUMO1." evidence="18">
    <original>L</original>
    <variation>A</variation>
    <location>
        <position position="472"/>
    </location>
</feature>
<feature type="mutagenesis site" description="Reduces affinity for SUMO1." evidence="18">
    <original>T</original>
    <variation>A</variation>
    <location>
        <position position="473"/>
    </location>
</feature>
<feature type="sequence conflict" description="In Ref. 2; AAK48938." evidence="27" ref="2">
    <original>P</original>
    <variation>L</variation>
    <location>
        <position position="144"/>
    </location>
</feature>
<feature type="sequence conflict" description="In Ref. 1; AAC36705." evidence="27" ref="1">
    <original>D</original>
    <variation>E</variation>
    <location>
        <position position="616"/>
    </location>
</feature>
<feature type="strand" evidence="34">
    <location>
        <begin position="154"/>
        <end position="165"/>
    </location>
</feature>
<feature type="strand" evidence="34">
    <location>
        <begin position="173"/>
        <end position="181"/>
    </location>
</feature>
<feature type="helix" evidence="34">
    <location>
        <begin position="185"/>
        <end position="192"/>
    </location>
</feature>
<feature type="strand" evidence="34">
    <location>
        <begin position="195"/>
        <end position="197"/>
    </location>
</feature>
<feature type="strand" evidence="34">
    <location>
        <begin position="203"/>
        <end position="215"/>
    </location>
</feature>
<feature type="strand" evidence="34">
    <location>
        <begin position="231"/>
        <end position="234"/>
    </location>
</feature>
<feature type="strand" evidence="34">
    <location>
        <begin position="237"/>
        <end position="239"/>
    </location>
</feature>
<feature type="helix" evidence="34">
    <location>
        <begin position="264"/>
        <end position="266"/>
    </location>
</feature>
<feature type="strand" evidence="34">
    <location>
        <begin position="271"/>
        <end position="273"/>
    </location>
</feature>
<feature type="strand" evidence="34">
    <location>
        <begin position="275"/>
        <end position="282"/>
    </location>
</feature>
<feature type="strand" evidence="34">
    <location>
        <begin position="289"/>
        <end position="298"/>
    </location>
</feature>
<feature type="helix" evidence="34">
    <location>
        <begin position="301"/>
        <end position="309"/>
    </location>
</feature>
<feature type="helix" evidence="34">
    <location>
        <begin position="316"/>
        <end position="327"/>
    </location>
</feature>
<feature type="strand" evidence="34">
    <location>
        <begin position="340"/>
        <end position="345"/>
    </location>
</feature>
<feature type="turn" evidence="34">
    <location>
        <begin position="347"/>
        <end position="349"/>
    </location>
</feature>
<feature type="strand" evidence="34">
    <location>
        <begin position="354"/>
        <end position="359"/>
    </location>
</feature>
<feature type="helix" evidence="34">
    <location>
        <begin position="370"/>
        <end position="379"/>
    </location>
</feature>
<feature type="turn" evidence="34">
    <location>
        <begin position="386"/>
        <end position="388"/>
    </location>
</feature>
<feature type="helix" evidence="34">
    <location>
        <begin position="394"/>
        <end position="396"/>
    </location>
</feature>
<feature type="strand" evidence="34">
    <location>
        <begin position="397"/>
        <end position="400"/>
    </location>
</feature>
<feature type="helix" evidence="34">
    <location>
        <begin position="401"/>
        <end position="407"/>
    </location>
</feature>
<feature type="strand" evidence="34">
    <location>
        <begin position="415"/>
        <end position="418"/>
    </location>
</feature>
<feature type="strand" evidence="33">
    <location>
        <begin position="469"/>
        <end position="471"/>
    </location>
</feature>
<feature type="cross-link" description="Glycyl lysine isopeptide (Lys-Gly) (interchain with G-Cter in SUMO2)" evidence="32">
    <location sequence="O75928-2">
        <position position="562"/>
    </location>
</feature>
<accession>O75928</accession>
<accession>O75927</accession>
<accession>Q96BT5</accession>
<accession>Q96KE3</accession>
<gene>
    <name type="primary">PIAS2</name>
    <name type="synonym">PIASX</name>
</gene>
<sequence>MADFEELRNMVSSFRVSELQVLLGFAGRNKSGRKHDLLMRALHLLKSGCSPAVQIKIRELYRRRYPRTLEGLSDLSTIKSSVFSLDGGSSPVEPDLAVAGIHSLPSTSVTPHSPSSPVGSVLLQDTKPTFEMQQPSPPIPPVHPDVQLKNLPFYDVLDVLIKPTSLVQSSIQRFQEKFFIFALTPQQVREICISRDFLPGGRRDYTVQVQLRLCLAETSCPQEDNYPNSLCIKVNGKLFPLPGYAPPPKNGIEQKRPGRPLNITSLVRLSSAVPNQISISWASEIGKNYSMSVYLVRQLTSAMLLQRLKMKGIRNPDHSRALIKEKLTADPDSEIATTSLRVSLMCPLGKMRLTIPCRAVTCTHLQCFDAALYLQMNEKKPTWICPVCDKKAAYESLILDGLFMEILNDCSDVDEIKFQEDGSWCPMRPKKEAMKVSSQPCTKIESSSVLSKPCSVTVASEASKKKVDVIDLTIESSSDEEEDPPAKRKCIFMSETQSSPTKGVLMYQPSSVRVPSVTSVDPAAIPPSLTDYSVPFHHTPISSMSSDLPGLDFLSLIPVDPQYCPPMFLDSLTSPLTASSTSVTTTSSHESSTHVSSSSSRSETGVITSSGSNIPDIISLD</sequence>
<reference key="1">
    <citation type="journal article" date="1998" name="Proc. Natl. Acad. Sci. U.S.A.">
        <title>Inhibition of Stat1-mediated gene activation by PIAS1.</title>
        <authorList>
            <person name="Liu B."/>
            <person name="Liao J."/>
            <person name="Rao X."/>
            <person name="Kushner S.A."/>
            <person name="Chung C.D."/>
            <person name="Chang D.D."/>
            <person name="Shuai K."/>
        </authorList>
    </citation>
    <scope>NUCLEOTIDE SEQUENCE [MRNA] (ISOFORMS PIAS2-ALPHA AND PIAS2-BETA)</scope>
    <source>
        <tissue>B-cell</tissue>
    </source>
</reference>
<reference key="2">
    <citation type="journal article" date="2004" name="Acta Pharmacol. Sin.">
        <title>Molecular cloning and characterization of a novel splicing variant of PIASx.</title>
        <authorList>
            <person name="Zheng Y."/>
            <person name="Zhou Z.-M."/>
            <person name="Yin L.-L."/>
            <person name="Li J.-M."/>
            <person name="Sha J.-H."/>
        </authorList>
    </citation>
    <scope>NUCLEOTIDE SEQUENCE [MRNA] (ISOFORM 3)</scope>
    <scope>TISSUE SPECIFICITY</scope>
    <scope>DEVELOPMENTAL STAGE</scope>
    <source>
        <tissue>Testis</tissue>
    </source>
</reference>
<reference key="3">
    <citation type="journal article" date="2005" name="Nature">
        <title>DNA sequence and analysis of human chromosome 18.</title>
        <authorList>
            <person name="Nusbaum C."/>
            <person name="Zody M.C."/>
            <person name="Borowsky M.L."/>
            <person name="Kamal M."/>
            <person name="Kodira C.D."/>
            <person name="Taylor T.D."/>
            <person name="Whittaker C.A."/>
            <person name="Chang J.L."/>
            <person name="Cuomo C.A."/>
            <person name="Dewar K."/>
            <person name="FitzGerald M.G."/>
            <person name="Yang X."/>
            <person name="Abouelleil A."/>
            <person name="Allen N.R."/>
            <person name="Anderson S."/>
            <person name="Bloom T."/>
            <person name="Bugalter B."/>
            <person name="Butler J."/>
            <person name="Cook A."/>
            <person name="DeCaprio D."/>
            <person name="Engels R."/>
            <person name="Garber M."/>
            <person name="Gnirke A."/>
            <person name="Hafez N."/>
            <person name="Hall J.L."/>
            <person name="Norman C.H."/>
            <person name="Itoh T."/>
            <person name="Jaffe D.B."/>
            <person name="Kuroki Y."/>
            <person name="Lehoczky J."/>
            <person name="Lui A."/>
            <person name="Macdonald P."/>
            <person name="Mauceli E."/>
            <person name="Mikkelsen T.S."/>
            <person name="Naylor J.W."/>
            <person name="Nicol R."/>
            <person name="Nguyen C."/>
            <person name="Noguchi H."/>
            <person name="O'Leary S.B."/>
            <person name="Piqani B."/>
            <person name="Smith C.L."/>
            <person name="Talamas J.A."/>
            <person name="Topham K."/>
            <person name="Totoki Y."/>
            <person name="Toyoda A."/>
            <person name="Wain H.M."/>
            <person name="Young S.K."/>
            <person name="Zeng Q."/>
            <person name="Zimmer A.R."/>
            <person name="Fujiyama A."/>
            <person name="Hattori M."/>
            <person name="Birren B.W."/>
            <person name="Sakaki Y."/>
            <person name="Lander E.S."/>
        </authorList>
    </citation>
    <scope>NUCLEOTIDE SEQUENCE [LARGE SCALE GENOMIC DNA]</scope>
</reference>
<reference key="4">
    <citation type="journal article" date="2004" name="Genome Res.">
        <title>The status, quality, and expansion of the NIH full-length cDNA project: the Mammalian Gene Collection (MGC).</title>
        <authorList>
            <consortium name="The MGC Project Team"/>
        </authorList>
    </citation>
    <scope>NUCLEOTIDE SEQUENCE [LARGE SCALE MRNA] (ISOFORM PIAS2-ALPHA)</scope>
    <source>
        <tissue>Brain</tissue>
    </source>
</reference>
<reference key="5">
    <citation type="journal article" date="1999" name="J. Biol. Chem.">
        <title>A testis-specific androgen receptor coregulator that belongs to a novel family of nuclear proteins.</title>
        <authorList>
            <person name="Moilanen A.-M."/>
            <person name="Karvonen U."/>
            <person name="Poukka H."/>
            <person name="Yan W."/>
            <person name="Toppari J."/>
            <person name="Jaenne O.A."/>
            <person name="Palvimo J.J."/>
        </authorList>
    </citation>
    <scope>TISSUE SPECIFICITY</scope>
</reference>
<reference key="6">
    <citation type="journal article" date="2000" name="J. Biol. Chem.">
        <title>Covalent modification of p73alpha by SUMO-1. Two-hybrid screening with p73 identifies novel SUMO-1-interacting proteins and a SUMO-1 interaction motif.</title>
        <authorList>
            <person name="Minty A."/>
            <person name="Dumont X."/>
            <person name="Kaghad M."/>
            <person name="Caput D."/>
        </authorList>
    </citation>
    <scope>INTERACTION WITH SUMO1; TP73 AND TP53</scope>
</reference>
<reference key="7">
    <citation type="journal article" date="2001" name="J. Biol. Chem.">
        <title>DJ-1 positively regulates the androgen receptor by impairing the binding of PIASx alpha to the receptor.</title>
        <authorList>
            <person name="Takahashi K."/>
            <person name="Taira T."/>
            <person name="Niki T."/>
            <person name="Seino C."/>
            <person name="Iguchi-Ariga S.M.M."/>
            <person name="Ariga H."/>
        </authorList>
    </citation>
    <scope>INTERACTION WITH PARK7</scope>
    <scope>SUBCELLULAR LOCATION</scope>
</reference>
<reference key="8">
    <citation type="journal article" date="2001" name="Oncogene">
        <title>Distinct effects of PIAS proteins on androgen-mediated gene activation in prostate cancer cells.</title>
        <authorList>
            <person name="Gross M."/>
            <person name="Liu B."/>
            <person name="Tan J.-A."/>
            <person name="French F.S."/>
            <person name="Carey M."/>
            <person name="Shuai K."/>
        </authorList>
    </citation>
    <scope>TISSUE SPECIFICITY</scope>
</reference>
<reference key="9">
    <citation type="journal article" date="2002" name="J. Biol. Chem.">
        <title>SUMO-1 modification of the C-terminal KVEKVD of Axin is required for JNK activation but has no effect on Wnt signaling.</title>
        <authorList>
            <person name="Rui H.L."/>
            <person name="Fan E."/>
            <person name="Zhou H.M."/>
            <person name="Xu Z."/>
            <person name="Zhang Y."/>
            <person name="Lin S.C."/>
        </authorList>
    </citation>
    <scope>INTERACTION WITH AXIN1</scope>
</reference>
<reference key="10">
    <citation type="journal article" date="2002" name="J. Biol. Chem.">
        <title>Sumoylation of Mdm2 by protein inhibitor of activated STAT (PIAS) and RanBP2 enzymes.</title>
        <authorList>
            <person name="Miyauchi Y."/>
            <person name="Yogosawa S."/>
            <person name="Honda R."/>
            <person name="Nishida T."/>
            <person name="Yasuda H."/>
        </authorList>
    </citation>
    <scope>SUMOYLATION OF MDM2</scope>
    <scope>SUBCELLULAR LOCATION</scope>
    <scope>MUTAGENESIS OF CYS-362</scope>
</reference>
<reference key="11">
    <citation type="journal article" date="2002" name="Proc. Natl. Acad. Sci. U.S.A.">
        <title>Members of the PIAS family act as SUMO ligases for c-Jun and p53 and repress p53 activity.</title>
        <authorList>
            <person name="Schmidt D."/>
            <person name="Mueller S."/>
        </authorList>
    </citation>
    <scope>INTERACTION WITH JUN; TP53 AND UBE2I</scope>
    <scope>SUMOYLATION</scope>
    <scope>MUTAGENESIS OF CYS-362</scope>
</reference>
<reference key="12">
    <citation type="journal article" date="2003" name="J. Biol. Chem.">
        <title>PIASx is a transcriptional co-repressor of signal transducer and activator of transcription 4.</title>
        <authorList>
            <person name="Arora T."/>
            <person name="Liu B."/>
            <person name="He H."/>
            <person name="Kim J."/>
            <person name="Murphy T.L."/>
            <person name="Murphy K.M."/>
            <person name="Modlin R.L."/>
            <person name="Shuai K."/>
        </authorList>
    </citation>
    <scope>INTERACTION WITH STAT4</scope>
    <scope>SUBCELLULAR LOCATION</scope>
</reference>
<reference key="13">
    <citation type="journal article" date="2004" name="J. Biol. Chem.">
        <title>Repression of the transactivating capacity of the oncoprotein PLAG1 by SUMOylation.</title>
        <authorList>
            <person name="Van Dyck F."/>
            <person name="Delvaux E.L.D."/>
            <person name="Van de Ven W.J.M."/>
            <person name="Chavez M.V."/>
        </authorList>
    </citation>
    <scope>INTERACTION WITH PLAG1</scope>
</reference>
<reference key="14">
    <citation type="journal article" date="2005" name="EMBO J.">
        <title>PIASx acts as an Elk-1 coactivator by facilitating derepression.</title>
        <authorList>
            <person name="Yang S.-H."/>
            <person name="Sharrocks A.D."/>
        </authorList>
    </citation>
    <scope>FUNCTION</scope>
    <scope>INTERACTION WITH ELK1</scope>
</reference>
<reference key="15">
    <citation type="journal article" date="2006" name="Cell Death Differ.">
        <title>Proper SUMO-1 conjugation is essential to DJ-1 to exert its full activities.</title>
        <authorList>
            <person name="Shinbo Y."/>
            <person name="Niki T."/>
            <person name="Taira T."/>
            <person name="Ooe H."/>
            <person name="Takahashi-Niki K."/>
            <person name="Maita C."/>
            <person name="Seino C."/>
            <person name="Iguchi-Ariga S.M.M."/>
            <person name="Ariga H."/>
        </authorList>
    </citation>
    <scope>FUNCTION IN PARK7 SUMOYLATION</scope>
</reference>
<reference key="16">
    <citation type="journal article" date="2006" name="J. Biol. Chem.">
        <title>Sumoylation delimits KLF8 transcriptional activity associated with the cell cycle regulation.</title>
        <authorList>
            <person name="Wei H."/>
            <person name="Wang X."/>
            <person name="Gan B."/>
            <person name="Urvalek A.M."/>
            <person name="Melkoumian Z.K."/>
            <person name="Guan J.-L."/>
            <person name="Zhao J."/>
        </authorList>
    </citation>
    <scope>INTERACTION WITH KLF8</scope>
</reference>
<reference key="17">
    <citation type="journal article" date="2010" name="Sci. Signal.">
        <title>Quantitative phosphoproteomics reveals widespread full phosphorylation site occupancy during mitosis.</title>
        <authorList>
            <person name="Olsen J.V."/>
            <person name="Vermeulen M."/>
            <person name="Santamaria A."/>
            <person name="Kumar C."/>
            <person name="Miller M.L."/>
            <person name="Jensen L.J."/>
            <person name="Gnad F."/>
            <person name="Cox J."/>
            <person name="Jensen T.S."/>
            <person name="Nigg E.A."/>
            <person name="Brunak S."/>
            <person name="Mann M."/>
        </authorList>
    </citation>
    <scope>IDENTIFICATION BY MASS SPECTROMETRY [LARGE SCALE ANALYSIS]</scope>
    <source>
        <tissue>Cervix carcinoma</tissue>
    </source>
</reference>
<reference key="18">
    <citation type="journal article" date="2011" name="Mol. Immunol.">
        <title>MDA5 is SUMOylated by PIAS2? in the upregulation of type I interferon signaling.</title>
        <authorList>
            <person name="Fu J."/>
            <person name="Xiong Y."/>
            <person name="Xu Y."/>
            <person name="Cheng G."/>
            <person name="Tang H."/>
        </authorList>
    </citation>
    <scope>INTERACTION WITH IFIH1/MDA5</scope>
</reference>
<reference key="19">
    <citation type="journal article" date="2011" name="Sci. Signal.">
        <title>System-wide temporal characterization of the proteome and phosphoproteome of human embryonic stem cell differentiation.</title>
        <authorList>
            <person name="Rigbolt K.T."/>
            <person name="Prokhorova T.A."/>
            <person name="Akimov V."/>
            <person name="Henningsen J."/>
            <person name="Johansen P.T."/>
            <person name="Kratchmarova I."/>
            <person name="Kassem M."/>
            <person name="Mann M."/>
            <person name="Olsen J.V."/>
            <person name="Blagoev B."/>
        </authorList>
    </citation>
    <scope>PHOSPHORYLATION [LARGE SCALE ANALYSIS] AT SER-476; SER-477 AND SER-478</scope>
    <scope>IDENTIFICATION BY MASS SPECTROMETRY [LARGE SCALE ANALYSIS]</scope>
</reference>
<reference key="20">
    <citation type="journal article" date="2012" name="Cancer Res.">
        <title>The SUMO E3-ligase PIAS1 regulates the tumor suppressor PML and its oncogenic counterpart PML-RARA.</title>
        <authorList>
            <person name="Rabellino A."/>
            <person name="Carter B."/>
            <person name="Konstantinidou G."/>
            <person name="Wu S.Y."/>
            <person name="Rimessi A."/>
            <person name="Byers L.A."/>
            <person name="Heymach J.V."/>
            <person name="Girard L."/>
            <person name="Chiang C.M."/>
            <person name="Teruya-Feldstein J."/>
            <person name="Scaglioni P.P."/>
        </authorList>
    </citation>
    <scope>FUNCTION</scope>
    <scope>SUBCELLULAR LOCATION</scope>
    <scope>INTERACTION WITH PML</scope>
</reference>
<reference key="21">
    <citation type="journal article" date="2014" name="Nat. Struct. Mol. Biol.">
        <title>Uncovering global SUMOylation signaling networks in a site-specific manner.</title>
        <authorList>
            <person name="Hendriks I.A."/>
            <person name="D'Souza R.C."/>
            <person name="Yang B."/>
            <person name="Verlaan-de Vries M."/>
            <person name="Mann M."/>
            <person name="Vertegaal A.C."/>
        </authorList>
    </citation>
    <scope>SUMOYLATION [LARGE SCALE ANALYSIS] AT LYS-249 AND LYS-443</scope>
    <scope>IDENTIFICATION BY MASS SPECTROMETRY [LARGE SCALE ANALYSIS]</scope>
</reference>
<reference key="22">
    <citation type="journal article" date="2015" name="Cell Rep.">
        <title>SUMO-2 orchestrates chromatin modifiers in response to DNA damage.</title>
        <authorList>
            <person name="Hendriks I.A."/>
            <person name="Treffers L.W."/>
            <person name="Verlaan-de Vries M."/>
            <person name="Olsen J.V."/>
            <person name="Vertegaal A.C."/>
        </authorList>
    </citation>
    <scope>SUMOYLATION [LARGE SCALE ANALYSIS] AT LYS-249; LYS-430; LYS-443 AND LYS-489</scope>
    <scope>IDENTIFICATION BY MASS SPECTROMETRY [LARGE SCALE ANALYSIS]</scope>
</reference>
<reference key="23">
    <citation type="journal article" date="2015" name="Mol. Cell. Proteomics">
        <title>System-wide analysis of SUMOylation dynamics in response to replication stress reveals novel small ubiquitin-like modified target proteins and acceptor lysines relevant for genome stability.</title>
        <authorList>
            <person name="Xiao Z."/>
            <person name="Chang J.G."/>
            <person name="Hendriks I.A."/>
            <person name="Sigurdsson J.O."/>
            <person name="Olsen J.V."/>
            <person name="Vertegaal A.C."/>
        </authorList>
    </citation>
    <scope>SUMOYLATION [LARGE SCALE ANALYSIS] AT LYS-249</scope>
    <scope>IDENTIFICATION BY MASS SPECTROMETRY [LARGE SCALE ANALYSIS]</scope>
</reference>
<reference key="24">
    <citation type="journal article" date="2017" name="Nat. Commun.">
        <title>HSP70-Hrd1 axis precludes the oncorepressor potential of N-terminal misfolded Blimp-1s in lymphoma cells.</title>
        <authorList>
            <person name="Wang W.F."/>
            <person name="Yan L."/>
            <person name="Liu Z."/>
            <person name="Liu L.X."/>
            <person name="Lin J."/>
            <person name="Liu Z.Y."/>
            <person name="Chen X.P."/>
            <person name="Zhang W."/>
            <person name="Xu Z.Z."/>
            <person name="Shi T."/>
            <person name="Li J.M."/>
            <person name="Zhao Y.L."/>
            <person name="Meng G."/>
            <person name="Xia Y."/>
            <person name="Li J.Y."/>
            <person name="Zhu J."/>
        </authorList>
    </citation>
    <scope>INTERACTION WITH PRDM1</scope>
</reference>
<reference key="25">
    <citation type="journal article" date="2017" name="Nat. Struct. Mol. Biol.">
        <title>Site-specific mapping of the human SUMO proteome reveals co-modification with phosphorylation.</title>
        <authorList>
            <person name="Hendriks I.A."/>
            <person name="Lyon D."/>
            <person name="Young C."/>
            <person name="Jensen L.J."/>
            <person name="Vertegaal A.C."/>
            <person name="Nielsen M.L."/>
        </authorList>
    </citation>
    <scope>SUMOYLATION [LARGE SCALE ANALYSIS] AT LYS-46; LYS-249; LYS-430; LYS-435; LYS-443; LYS-452; LYS-489 AND LYS-502</scope>
    <scope>SUMOYLATION [LARGE SCALE ANALYSIS] AT LYS-562 (ISOFORM PIAS2-ALPHA)</scope>
    <scope>IDENTIFICATION BY MASS SPECTROMETRY [LARGE SCALE ANALYSIS]</scope>
</reference>
<reference key="26">
    <citation type="journal article" date="2005" name="J. Biol. Chem.">
        <title>Small ubiquitin-like modifier (SUMO) recognition of a SUMO binding motif: a reversal of the bound orientation.</title>
        <authorList>
            <person name="Song J."/>
            <person name="Zhang Z."/>
            <person name="Hu W."/>
            <person name="Chen Y."/>
        </authorList>
    </citation>
    <scope>STRUCTURE BY NMR OF 466-488 IN COMPLEX WITH SUMO1</scope>
    <scope>MUTAGENESIS OF VAL-467; VAL-469; ILE-470; LEU-472 AND THR-473</scope>
</reference>
<dbReference type="EC" id="2.3.2.-"/>
<dbReference type="EMBL" id="AF077953">
    <property type="protein sequence ID" value="AAC36704.1"/>
    <property type="molecule type" value="mRNA"/>
</dbReference>
<dbReference type="EMBL" id="AF077954">
    <property type="protein sequence ID" value="AAC36705.1"/>
    <property type="molecule type" value="mRNA"/>
</dbReference>
<dbReference type="EMBL" id="AF361054">
    <property type="protein sequence ID" value="AAK48938.1"/>
    <property type="molecule type" value="mRNA"/>
</dbReference>
<dbReference type="EMBL" id="AC090241">
    <property type="status" value="NOT_ANNOTATED_CDS"/>
    <property type="molecule type" value="Genomic_DNA"/>
</dbReference>
<dbReference type="EMBL" id="AC090373">
    <property type="status" value="NOT_ANNOTATED_CDS"/>
    <property type="molecule type" value="Genomic_DNA"/>
</dbReference>
<dbReference type="EMBL" id="BC015190">
    <property type="protein sequence ID" value="AAH15190.1"/>
    <property type="molecule type" value="mRNA"/>
</dbReference>
<dbReference type="CCDS" id="CCDS32824.1">
    <molecule id="O75928-1"/>
</dbReference>
<dbReference type="CCDS" id="CCDS32825.1">
    <molecule id="O75928-2"/>
</dbReference>
<dbReference type="RefSeq" id="NP_001310989.1">
    <molecule id="O75928-3"/>
    <property type="nucleotide sequence ID" value="NM_001324060.2"/>
</dbReference>
<dbReference type="RefSeq" id="NP_004662.2">
    <molecule id="O75928-1"/>
    <property type="nucleotide sequence ID" value="NM_004671.5"/>
</dbReference>
<dbReference type="RefSeq" id="NP_775298.1">
    <molecule id="O75928-2"/>
    <property type="nucleotide sequence ID" value="NM_173206.4"/>
</dbReference>
<dbReference type="PDB" id="2ASQ">
    <property type="method" value="NMR"/>
    <property type="chains" value="B=466-488"/>
</dbReference>
<dbReference type="PDB" id="4FO9">
    <property type="method" value="X-ray"/>
    <property type="resolution" value="2.39 A"/>
    <property type="chains" value="A=147-488"/>
</dbReference>
<dbReference type="PDBsum" id="2ASQ"/>
<dbReference type="PDBsum" id="4FO9"/>
<dbReference type="SMR" id="O75928"/>
<dbReference type="BioGRID" id="114523">
    <property type="interactions" value="171"/>
</dbReference>
<dbReference type="ELM" id="O75928"/>
<dbReference type="FunCoup" id="O75928">
    <property type="interactions" value="3606"/>
</dbReference>
<dbReference type="IntAct" id="O75928">
    <property type="interactions" value="136"/>
</dbReference>
<dbReference type="MINT" id="O75928"/>
<dbReference type="STRING" id="9606.ENSP00000465676"/>
<dbReference type="GlyGen" id="O75928">
    <property type="glycosylation" value="2 sites, 1 N-linked glycan (1 site), 1 O-linked glycan (1 site)"/>
</dbReference>
<dbReference type="iPTMnet" id="O75928"/>
<dbReference type="PhosphoSitePlus" id="O75928"/>
<dbReference type="BioMuta" id="PIAS2"/>
<dbReference type="jPOST" id="O75928"/>
<dbReference type="MassIVE" id="O75928"/>
<dbReference type="PaxDb" id="9606-ENSP00000465676"/>
<dbReference type="PeptideAtlas" id="O75928"/>
<dbReference type="ProteomicsDB" id="50294">
    <molecule id="O75928-1"/>
</dbReference>
<dbReference type="ProteomicsDB" id="50295">
    <molecule id="O75928-2"/>
</dbReference>
<dbReference type="ProteomicsDB" id="50296">
    <molecule id="O75928-3"/>
</dbReference>
<dbReference type="Pumba" id="O75928"/>
<dbReference type="Antibodypedia" id="9110">
    <property type="antibodies" value="527 antibodies from 40 providers"/>
</dbReference>
<dbReference type="DNASU" id="9063"/>
<dbReference type="Ensembl" id="ENST00000324794.11">
    <molecule id="O75928-2"/>
    <property type="protein sequence ID" value="ENSP00000317163.6"/>
    <property type="gene ID" value="ENSG00000078043.16"/>
</dbReference>
<dbReference type="Ensembl" id="ENST00000585916.6">
    <molecule id="O75928-1"/>
    <property type="protein sequence ID" value="ENSP00000465676.1"/>
    <property type="gene ID" value="ENSG00000078043.16"/>
</dbReference>
<dbReference type="GeneID" id="9063"/>
<dbReference type="KEGG" id="hsa:9063"/>
<dbReference type="MANE-Select" id="ENST00000585916.6">
    <property type="protein sequence ID" value="ENSP00000465676.1"/>
    <property type="RefSeq nucleotide sequence ID" value="NM_004671.5"/>
    <property type="RefSeq protein sequence ID" value="NP_004662.2"/>
</dbReference>
<dbReference type="UCSC" id="uc002lck.4">
    <molecule id="O75928-1"/>
    <property type="organism name" value="human"/>
</dbReference>
<dbReference type="AGR" id="HGNC:17311"/>
<dbReference type="CTD" id="9063"/>
<dbReference type="DisGeNET" id="9063"/>
<dbReference type="GeneCards" id="PIAS2"/>
<dbReference type="HGNC" id="HGNC:17311">
    <property type="gene designation" value="PIAS2"/>
</dbReference>
<dbReference type="HPA" id="ENSG00000078043">
    <property type="expression patterns" value="Tissue enriched (testis)"/>
</dbReference>
<dbReference type="MIM" id="603567">
    <property type="type" value="gene"/>
</dbReference>
<dbReference type="neXtProt" id="NX_O75928"/>
<dbReference type="OpenTargets" id="ENSG00000078043"/>
<dbReference type="PharmGKB" id="PA134933292"/>
<dbReference type="VEuPathDB" id="HostDB:ENSG00000078043"/>
<dbReference type="eggNOG" id="KOG2169">
    <property type="taxonomic scope" value="Eukaryota"/>
</dbReference>
<dbReference type="GeneTree" id="ENSGT01030000234539"/>
<dbReference type="HOGENOM" id="CLU_020768_3_0_1"/>
<dbReference type="InParanoid" id="O75928"/>
<dbReference type="OMA" id="DPQQYCP"/>
<dbReference type="OrthoDB" id="10263264at2759"/>
<dbReference type="PAN-GO" id="O75928">
    <property type="GO annotations" value="4 GO annotations based on evolutionary models"/>
</dbReference>
<dbReference type="PhylomeDB" id="O75928"/>
<dbReference type="PathwayCommons" id="O75928"/>
<dbReference type="Reactome" id="R-HSA-3108214">
    <molecule id="O75928-1"/>
    <property type="pathway name" value="SUMOylation of DNA damage response and repair proteins"/>
</dbReference>
<dbReference type="Reactome" id="R-HSA-3232118">
    <molecule id="O75928-1"/>
    <property type="pathway name" value="SUMOylation of transcription factors"/>
</dbReference>
<dbReference type="Reactome" id="R-HSA-3232142">
    <molecule id="O75928-1"/>
    <property type="pathway name" value="SUMOylation of ubiquitinylation proteins"/>
</dbReference>
<dbReference type="Reactome" id="R-HSA-3899300">
    <molecule id="O75928-1"/>
    <property type="pathway name" value="SUMOylation of transcription cofactors"/>
</dbReference>
<dbReference type="Reactome" id="R-HSA-4090294">
    <property type="pathway name" value="SUMOylation of intracellular receptors"/>
</dbReference>
<dbReference type="Reactome" id="R-HSA-4551638">
    <molecule id="O75928-2"/>
    <property type="pathway name" value="SUMOylation of chromatin organization proteins"/>
</dbReference>
<dbReference type="Reactome" id="R-HSA-5617472">
    <property type="pathway name" value="Activation of anterior HOX genes in hindbrain development during early embryogenesis"/>
</dbReference>
<dbReference type="SignaLink" id="O75928"/>
<dbReference type="SIGNOR" id="O75928"/>
<dbReference type="UniPathway" id="UPA00886"/>
<dbReference type="BioGRID-ORCS" id="9063">
    <property type="hits" value="16 hits in 1200 CRISPR screens"/>
</dbReference>
<dbReference type="CD-CODE" id="804901D1">
    <property type="entry name" value="Nuclear speckle"/>
</dbReference>
<dbReference type="CD-CODE" id="B5B9A610">
    <property type="entry name" value="PML body"/>
</dbReference>
<dbReference type="CD-CODE" id="E0298522">
    <property type="entry name" value="Synthetic Condensate 000165"/>
</dbReference>
<dbReference type="ChiTaRS" id="PIAS2">
    <property type="organism name" value="human"/>
</dbReference>
<dbReference type="EvolutionaryTrace" id="O75928"/>
<dbReference type="GeneWiki" id="Protein_inhibitor_of_activated_STAT2"/>
<dbReference type="GenomeRNAi" id="9063"/>
<dbReference type="Pharos" id="O75928">
    <property type="development level" value="Tbio"/>
</dbReference>
<dbReference type="PRO" id="PR:O75928"/>
<dbReference type="Proteomes" id="UP000005640">
    <property type="component" value="Chromosome 18"/>
</dbReference>
<dbReference type="RNAct" id="O75928">
    <property type="molecule type" value="protein"/>
</dbReference>
<dbReference type="Bgee" id="ENSG00000078043">
    <property type="expression patterns" value="Expressed in sperm and 209 other cell types or tissues"/>
</dbReference>
<dbReference type="ExpressionAtlas" id="O75928">
    <property type="expression patterns" value="baseline and differential"/>
</dbReference>
<dbReference type="GO" id="GO:0000785">
    <property type="term" value="C:chromatin"/>
    <property type="evidence" value="ECO:0000318"/>
    <property type="project" value="GO_Central"/>
</dbReference>
<dbReference type="GO" id="GO:0016607">
    <property type="term" value="C:nuclear speck"/>
    <property type="evidence" value="ECO:0007669"/>
    <property type="project" value="UniProtKB-SubCell"/>
</dbReference>
<dbReference type="GO" id="GO:0005654">
    <property type="term" value="C:nucleoplasm"/>
    <property type="evidence" value="ECO:0000314"/>
    <property type="project" value="HPA"/>
</dbReference>
<dbReference type="GO" id="GO:0005634">
    <property type="term" value="C:nucleus"/>
    <property type="evidence" value="ECO:0000314"/>
    <property type="project" value="UniProtKB"/>
</dbReference>
<dbReference type="GO" id="GO:0016605">
    <property type="term" value="C:PML body"/>
    <property type="evidence" value="ECO:0007669"/>
    <property type="project" value="UniProtKB-SubCell"/>
</dbReference>
<dbReference type="GO" id="GO:0003677">
    <property type="term" value="F:DNA binding"/>
    <property type="evidence" value="ECO:0007669"/>
    <property type="project" value="UniProtKB-KW"/>
</dbReference>
<dbReference type="GO" id="GO:0061629">
    <property type="term" value="F:RNA polymerase II-specific DNA-binding transcription factor binding"/>
    <property type="evidence" value="ECO:0000353"/>
    <property type="project" value="ParkinsonsUK-UCL"/>
</dbReference>
<dbReference type="GO" id="GO:0061665">
    <property type="term" value="F:SUMO ligase activity"/>
    <property type="evidence" value="ECO:0000314"/>
    <property type="project" value="ParkinsonsUK-UCL"/>
</dbReference>
<dbReference type="GO" id="GO:0019789">
    <property type="term" value="F:SUMO transferase activity"/>
    <property type="evidence" value="ECO:0000269"/>
    <property type="project" value="Reactome"/>
</dbReference>
<dbReference type="GO" id="GO:0003712">
    <property type="term" value="F:transcription coregulator activity"/>
    <property type="evidence" value="ECO:0000318"/>
    <property type="project" value="GO_Central"/>
</dbReference>
<dbReference type="GO" id="GO:0031625">
    <property type="term" value="F:ubiquitin protein ligase binding"/>
    <property type="evidence" value="ECO:0007669"/>
    <property type="project" value="Ensembl"/>
</dbReference>
<dbReference type="GO" id="GO:0008270">
    <property type="term" value="F:zinc ion binding"/>
    <property type="evidence" value="ECO:0000304"/>
    <property type="project" value="ProtInc"/>
</dbReference>
<dbReference type="GO" id="GO:0006351">
    <property type="term" value="P:DNA-templated transcription"/>
    <property type="evidence" value="ECO:0007669"/>
    <property type="project" value="Ensembl"/>
</dbReference>
<dbReference type="GO" id="GO:0060766">
    <property type="term" value="P:negative regulation of androgen receptor signaling pathway"/>
    <property type="evidence" value="ECO:0000314"/>
    <property type="project" value="UniProtKB"/>
</dbReference>
<dbReference type="GO" id="GO:0043433">
    <property type="term" value="P:negative regulation of DNA-binding transcription factor activity"/>
    <property type="evidence" value="ECO:0000314"/>
    <property type="project" value="ParkinsonsUK-UCL"/>
</dbReference>
<dbReference type="GO" id="GO:0016925">
    <property type="term" value="P:protein sumoylation"/>
    <property type="evidence" value="ECO:0000314"/>
    <property type="project" value="ParkinsonsUK-UCL"/>
</dbReference>
<dbReference type="GO" id="GO:0006357">
    <property type="term" value="P:regulation of transcription by RNA polymerase II"/>
    <property type="evidence" value="ECO:0000318"/>
    <property type="project" value="GO_Central"/>
</dbReference>
<dbReference type="CDD" id="cd16819">
    <property type="entry name" value="SP-RING_PIAS2"/>
    <property type="match status" value="1"/>
</dbReference>
<dbReference type="DisProt" id="DP01675"/>
<dbReference type="FunFam" id="1.10.720.30:FF:000001">
    <property type="entry name" value="E3 SUMO-protein ligase PIAS2 isoform 1"/>
    <property type="match status" value="1"/>
</dbReference>
<dbReference type="FunFam" id="2.60.120.780:FF:000001">
    <property type="entry name" value="E3 SUMO-protein ligase PIAS2 isoform X1"/>
    <property type="match status" value="1"/>
</dbReference>
<dbReference type="FunFam" id="3.30.40.10:FF:000003">
    <property type="entry name" value="E3 SUMO-protein ligase PIAS2 isoform X1"/>
    <property type="match status" value="1"/>
</dbReference>
<dbReference type="Gene3D" id="2.60.120.780">
    <property type="entry name" value="PINIT domain"/>
    <property type="match status" value="1"/>
</dbReference>
<dbReference type="Gene3D" id="1.10.720.30">
    <property type="entry name" value="SAP domain"/>
    <property type="match status" value="1"/>
</dbReference>
<dbReference type="Gene3D" id="3.30.40.10">
    <property type="entry name" value="Zinc/RING finger domain, C3HC4 (zinc finger)"/>
    <property type="match status" value="1"/>
</dbReference>
<dbReference type="IDEAL" id="IID00136"/>
<dbReference type="InterPro" id="IPR023321">
    <property type="entry name" value="PINIT"/>
</dbReference>
<dbReference type="InterPro" id="IPR038654">
    <property type="entry name" value="PINIT_sf"/>
</dbReference>
<dbReference type="InterPro" id="IPR003034">
    <property type="entry name" value="SAP_dom"/>
</dbReference>
<dbReference type="InterPro" id="IPR036361">
    <property type="entry name" value="SAP_dom_sf"/>
</dbReference>
<dbReference type="InterPro" id="IPR004181">
    <property type="entry name" value="Znf_MIZ"/>
</dbReference>
<dbReference type="InterPro" id="IPR013083">
    <property type="entry name" value="Znf_RING/FYVE/PHD"/>
</dbReference>
<dbReference type="PANTHER" id="PTHR10782:SF12">
    <property type="entry name" value="E3 SUMO-PROTEIN LIGASE PIAS2"/>
    <property type="match status" value="1"/>
</dbReference>
<dbReference type="PANTHER" id="PTHR10782">
    <property type="entry name" value="ZINC FINGER MIZ DOMAIN-CONTAINING PROTEIN"/>
    <property type="match status" value="1"/>
</dbReference>
<dbReference type="Pfam" id="PF14324">
    <property type="entry name" value="PINIT"/>
    <property type="match status" value="1"/>
</dbReference>
<dbReference type="Pfam" id="PF02037">
    <property type="entry name" value="SAP"/>
    <property type="match status" value="1"/>
</dbReference>
<dbReference type="Pfam" id="PF02891">
    <property type="entry name" value="zf-MIZ"/>
    <property type="match status" value="1"/>
</dbReference>
<dbReference type="SMART" id="SM00513">
    <property type="entry name" value="SAP"/>
    <property type="match status" value="1"/>
</dbReference>
<dbReference type="SUPFAM" id="SSF68906">
    <property type="entry name" value="SAP domain"/>
    <property type="match status" value="1"/>
</dbReference>
<dbReference type="PROSITE" id="PS51466">
    <property type="entry name" value="PINIT"/>
    <property type="match status" value="1"/>
</dbReference>
<dbReference type="PROSITE" id="PS50800">
    <property type="entry name" value="SAP"/>
    <property type="match status" value="1"/>
</dbReference>
<dbReference type="PROSITE" id="PS51044">
    <property type="entry name" value="ZF_SP_RING"/>
    <property type="match status" value="1"/>
</dbReference>
<keyword id="KW-0002">3D-structure</keyword>
<keyword id="KW-0025">Alternative splicing</keyword>
<keyword id="KW-0238">DNA-binding</keyword>
<keyword id="KW-1017">Isopeptide bond</keyword>
<keyword id="KW-0479">Metal-binding</keyword>
<keyword id="KW-0539">Nucleus</keyword>
<keyword id="KW-0597">Phosphoprotein</keyword>
<keyword id="KW-1267">Proteomics identification</keyword>
<keyword id="KW-1185">Reference proteome</keyword>
<keyword id="KW-0804">Transcription</keyword>
<keyword id="KW-0805">Transcription regulation</keyword>
<keyword id="KW-0808">Transferase</keyword>
<keyword id="KW-0832">Ubl conjugation</keyword>
<keyword id="KW-0833">Ubl conjugation pathway</keyword>
<keyword id="KW-0862">Zinc</keyword>
<keyword id="KW-0863">Zinc-finger</keyword>
<proteinExistence type="evidence at protein level"/>
<comment type="function">
    <text evidence="16 17 21">Functions as an E3-type small ubiquitin-like modifier (SUMO) ligase, stabilizing the interaction between UBE2I and the substrate, and as a SUMO-tethering factor. Plays a crucial role as a transcriptional coregulator in various cellular pathways, including the STAT pathway, the p53 pathway and the steroid hormone signaling pathway. The effects of this transcriptional coregulation, transactivation or silencing may vary depending upon the biological context and the PIAS2 isoform studied. However, it seems to be mostly involved in gene silencing. Binds to sumoylated ELK1 and enhances its transcriptional activity by preventing recruitment of HDAC2 by ELK1, thus reversing SUMO-mediated repression of ELK1 transactivation activity. Isoform PIAS2-beta, but not isoform PIAS2-alpha, promotes MDM2 sumoylation. Isoform PIAS2-alpha promotes PARK7 sumoylation. Isoform PIAS2-beta promotes NCOA2 sumoylation more efficiently than isoform PIAS2-alpha. Isoform PIAS2-alpha sumoylates PML at'Lys-65' and 'Lys-160'.</text>
</comment>
<comment type="pathway">
    <text>Protein modification; protein sumoylation.</text>
</comment>
<comment type="subunit">
    <text evidence="1 7 9 10 11 13 14 16 18 19 20 21 22">Binds SUMO1 and UBE2I. Interacts with AXIN1, JUN, MDM2, PARK7, TP53 and TP73 isoform alpha, but not TP73 isoform beta. Interacts with STAT4 following IL12 and IFN-alpha stimulation of T-cells. Interacts also with GTF2I, GTF2IRD1, IKFZ1, DAB2 and MSX2, as well as with several steroid receptors, including ESR1, ESR2, NR3C1, PGR, AR, and with NCOA2 (By similarity). Sumoylation of a target protein seems to enhance the interaction. Binds to sumoylated ELK1. Binds DNA, such as CDKN1A promoter, in a sequence-specific manner. Interacts with PLAG1. Interacts with KLF8; the interaction results in SUMO ligation and repression of KLF8 transcriptional activity and of its cell cycle progression into G(1) phase. PIAS2-beta interacts with IFIH1/MDA5. Isoform PIAS2-alpha interacts with PML (isoform PML-12). Interacts with PRDM1/Blimp-1 (PubMed:28842558).</text>
</comment>
<comment type="interaction">
    <interactant intactId="EBI-348555">
        <id>O75928</id>
    </interactant>
    <interactant intactId="EBI-3916242">
        <id>Q96HD9</id>
        <label>ACY3</label>
    </interactant>
    <organismsDiffer>false</organismsDiffer>
    <experiments>3</experiments>
</comment>
<comment type="interaction">
    <interactant intactId="EBI-348555">
        <id>O75928</id>
    </interactant>
    <interactant intactId="EBI-10175300">
        <id>Q8TD31-3</id>
        <label>CCHCR1</label>
    </interactant>
    <organismsDiffer>false</organismsDiffer>
    <experiments>3</experiments>
</comment>
<comment type="interaction">
    <interactant intactId="EBI-348555">
        <id>O75928</id>
    </interactant>
    <interactant intactId="EBI-748961">
        <id>O95273</id>
        <label>CCNDBP1</label>
    </interactant>
    <organismsDiffer>false</organismsDiffer>
    <experiments>4</experiments>
</comment>
<comment type="interaction">
    <interactant intactId="EBI-348555">
        <id>O75928</id>
    </interactant>
    <interactant intactId="EBI-744302">
        <id>P14136</id>
        <label>GFAP</label>
    </interactant>
    <organismsDiffer>false</organismsDiffer>
    <experiments>3</experiments>
</comment>
<comment type="interaction">
    <interactant intactId="EBI-348555">
        <id>O75928</id>
    </interactant>
    <interactant intactId="EBI-618309">
        <id>Q08379</id>
        <label>GOLGA2</label>
    </interactant>
    <organismsDiffer>false</organismsDiffer>
    <experiments>3</experiments>
</comment>
<comment type="interaction">
    <interactant intactId="EBI-348555">
        <id>O75928</id>
    </interactant>
    <interactant intactId="EBI-10200618">
        <id>P20592</id>
        <label>MX2</label>
    </interactant>
    <organismsDiffer>false</organismsDiffer>
    <experiments>3</experiments>
</comment>
<comment type="interaction">
    <interactant intactId="EBI-348555">
        <id>O75928</id>
    </interactant>
    <interactant intactId="EBI-447544">
        <id>P01106</id>
        <label>MYC</label>
    </interactant>
    <organismsDiffer>false</organismsDiffer>
    <experiments>4</experiments>
</comment>
<comment type="interaction">
    <interactant intactId="EBI-348555">
        <id>O75928</id>
    </interactant>
    <interactant intactId="EBI-741200">
        <id>Q8IVL1</id>
        <label>NAV2</label>
    </interactant>
    <organismsDiffer>false</organismsDiffer>
    <experiments>4</experiments>
</comment>
<comment type="interaction">
    <interactant intactId="EBI-348555">
        <id>O75928</id>
    </interactant>
    <interactant intactId="EBI-1053424">
        <id>O43741</id>
        <label>PRKAB2</label>
    </interactant>
    <organismsDiffer>false</organismsDiffer>
    <experiments>3</experiments>
</comment>
<comment type="interaction">
    <interactant intactId="EBI-348555">
        <id>O75928</id>
    </interactant>
    <interactant intactId="EBI-296739">
        <id>P63244</id>
        <label>RACK1</label>
    </interactant>
    <organismsDiffer>false</organismsDiffer>
    <experiments>2</experiments>
</comment>
<comment type="interaction">
    <interactant intactId="EBI-348555">
        <id>O75928</id>
    </interactant>
    <interactant intactId="EBI-3941207">
        <id>Q96T51</id>
        <label>RUFY1</label>
    </interactant>
    <organismsDiffer>false</organismsDiffer>
    <experiments>3</experiments>
</comment>
<comment type="interaction">
    <interactant intactId="EBI-348555">
        <id>O75928</id>
    </interactant>
    <interactant intactId="EBI-80140">
        <id>P63165</id>
        <label>SUMO1</label>
    </interactant>
    <organismsDiffer>false</organismsDiffer>
    <experiments>8</experiments>
</comment>
<comment type="interaction">
    <interactant intactId="EBI-348555">
        <id>O75928</id>
    </interactant>
    <interactant intactId="EBI-10175576">
        <id>G2XKQ0</id>
        <label>SUMO1P1</label>
    </interactant>
    <organismsDiffer>false</organismsDiffer>
    <experiments>3</experiments>
</comment>
<comment type="interaction">
    <interactant intactId="EBI-348555">
        <id>O75928</id>
    </interactant>
    <interactant intactId="EBI-740098">
        <id>P36406</id>
        <label>TRIM23</label>
    </interactant>
    <organismsDiffer>false</organismsDiffer>
    <experiments>3</experiments>
</comment>
<comment type="interaction">
    <interactant intactId="EBI-348555">
        <id>O75928</id>
    </interactant>
    <interactant intactId="EBI-746981">
        <id>Q969E8</id>
        <label>TSR2</label>
    </interactant>
    <organismsDiffer>false</organismsDiffer>
    <experiments>3</experiments>
</comment>
<comment type="interaction">
    <interactant intactId="EBI-348555">
        <id>O75928</id>
    </interactant>
    <interactant intactId="EBI-80168">
        <id>P63279</id>
        <label>UBE2I</label>
    </interactant>
    <organismsDiffer>false</organismsDiffer>
    <experiments>8</experiments>
</comment>
<comment type="interaction">
    <interactant intactId="EBI-348555">
        <id>O75928</id>
    </interactant>
    <interactant intactId="EBI-10180829">
        <id>Q7KZS0</id>
        <label>UBE2I</label>
    </interactant>
    <organismsDiffer>false</organismsDiffer>
    <experiments>3</experiments>
</comment>
<comment type="interaction">
    <interactant intactId="EBI-348555">
        <id>O75928</id>
    </interactant>
    <interactant intactId="EBI-740037">
        <id>O96006</id>
        <label>ZBED1</label>
    </interactant>
    <organismsDiffer>false</organismsDiffer>
    <experiments>3</experiments>
</comment>
<comment type="interaction">
    <interactant intactId="EBI-348555">
        <id>O75928</id>
    </interactant>
    <interactant intactId="EBI-742740">
        <id>Q96BR9</id>
        <label>ZBTB8A</label>
    </interactant>
    <organismsDiffer>false</organismsDiffer>
    <experiments>3</experiments>
</comment>
<comment type="interaction">
    <interactant intactId="EBI-348555">
        <id>O75928</id>
    </interactant>
    <interactant intactId="EBI-10243413">
        <id>Q59GP6</id>
    </interactant>
    <organismsDiffer>false</organismsDiffer>
    <experiments>3</experiments>
</comment>
<comment type="interaction">
    <interactant intactId="EBI-348567">
        <id>O75928-2</id>
    </interactant>
    <interactant intactId="EBI-1170906">
        <id>P15336</id>
        <label>ATF2</label>
    </interactant>
    <organismsDiffer>false</organismsDiffer>
    <experiments>3</experiments>
</comment>
<comment type="interaction">
    <interactant intactId="EBI-348567">
        <id>O75928-2</id>
    </interactant>
    <interactant intactId="EBI-9995695">
        <id>Q7Z6I8</id>
        <label>C5orf24</label>
    </interactant>
    <organismsDiffer>false</organismsDiffer>
    <experiments>3</experiments>
</comment>
<comment type="interaction">
    <interactant intactId="EBI-348567">
        <id>O75928-2</id>
    </interactant>
    <interactant intactId="EBI-740135">
        <id>P35520</id>
        <label>CBS</label>
    </interactant>
    <organismsDiffer>false</organismsDiffer>
    <experiments>3</experiments>
</comment>
<comment type="interaction">
    <interactant intactId="EBI-348567">
        <id>O75928-2</id>
    </interactant>
    <interactant intactId="EBI-723153">
        <id>Q9UFW8</id>
        <label>CGGBP1</label>
    </interactant>
    <organismsDiffer>false</organismsDiffer>
    <experiments>3</experiments>
</comment>
<comment type="interaction">
    <interactant intactId="EBI-348567">
        <id>O75928-2</id>
    </interactant>
    <interactant intactId="EBI-711855">
        <id>P16220</id>
        <label>CREB1</label>
    </interactant>
    <organismsDiffer>false</organismsDiffer>
    <experiments>3</experiments>
</comment>
<comment type="interaction">
    <interactant intactId="EBI-348567">
        <id>O75928-2</id>
    </interactant>
    <interactant intactId="EBI-1055572">
        <id>P17661</id>
        <label>DES</label>
    </interactant>
    <organismsDiffer>false</organismsDiffer>
    <experiments>3</experiments>
</comment>
<comment type="interaction">
    <interactant intactId="EBI-348567">
        <id>O75928-2</id>
    </interactant>
    <interactant intactId="EBI-748597">
        <id>Q05D60</id>
        <label>DEUP1</label>
    </interactant>
    <organismsDiffer>false</organismsDiffer>
    <experiments>3</experiments>
</comment>
<comment type="interaction">
    <interactant intactId="EBI-348567">
        <id>O75928-2</id>
    </interactant>
    <interactant intactId="EBI-930865">
        <id>Q14565</id>
        <label>DMC1</label>
    </interactant>
    <organismsDiffer>false</organismsDiffer>
    <experiments>3</experiments>
</comment>
<comment type="interaction">
    <interactant intactId="EBI-348567">
        <id>O75928-2</id>
    </interactant>
    <interactant intactId="EBI-997311">
        <id>Q96F86</id>
        <label>EDC3</label>
    </interactant>
    <organismsDiffer>false</organismsDiffer>
    <experiments>3</experiments>
</comment>
<comment type="interaction">
    <interactant intactId="EBI-348567">
        <id>O75928-2</id>
    </interactant>
    <interactant intactId="EBI-371922">
        <id>Q96B26</id>
        <label>EXOSC8</label>
    </interactant>
    <organismsDiffer>false</organismsDiffer>
    <experiments>3</experiments>
</comment>
<comment type="interaction">
    <interactant intactId="EBI-348567">
        <id>O75928-2</id>
    </interactant>
    <interactant intactId="EBI-726822">
        <id>Q9BPY3</id>
        <label>FAM118B</label>
    </interactant>
    <organismsDiffer>false</organismsDiffer>
    <experiments>3</experiments>
</comment>
<comment type="interaction">
    <interactant intactId="EBI-348567">
        <id>O75928-2</id>
    </interactant>
    <interactant intactId="EBI-744771">
        <id>O75344</id>
        <label>FKBP6</label>
    </interactant>
    <organismsDiffer>false</organismsDiffer>
    <experiments>5</experiments>
</comment>
<comment type="interaction">
    <interactant intactId="EBI-348567">
        <id>O75928-2</id>
    </interactant>
    <interactant intactId="EBI-744302">
        <id>P14136</id>
        <label>GFAP</label>
    </interactant>
    <organismsDiffer>false</organismsDiffer>
    <experiments>6</experiments>
</comment>
<comment type="interaction">
    <interactant intactId="EBI-348567">
        <id>O75928-2</id>
    </interactant>
    <interactant intactId="EBI-10219092">
        <id>Q6ISB3</id>
        <label>GRHL2</label>
    </interactant>
    <organismsDiffer>false</organismsDiffer>
    <experiments>3</experiments>
</comment>
<comment type="interaction">
    <interactant intactId="EBI-348567">
        <id>O75928-2</id>
    </interactant>
    <interactant intactId="EBI-2549423">
        <id>Q6NT76</id>
        <label>HMBOX1</label>
    </interactant>
    <organismsDiffer>false</organismsDiffer>
    <experiments>3</experiments>
</comment>
<comment type="interaction">
    <interactant intactId="EBI-348567">
        <id>O75928-2</id>
    </interactant>
    <interactant intactId="EBI-740641">
        <id>Q9NP66</id>
        <label>HMG20A</label>
    </interactant>
    <organismsDiffer>false</organismsDiffer>
    <experiments>3</experiments>
</comment>
<comment type="interaction">
    <interactant intactId="EBI-348567">
        <id>O75928-2</id>
    </interactant>
    <interactant intactId="EBI-713401">
        <id>Q9P0W2</id>
        <label>HMG20B</label>
    </interactant>
    <organismsDiffer>false</organismsDiffer>
    <experiments>5</experiments>
</comment>
<comment type="interaction">
    <interactant intactId="EBI-348567">
        <id>O75928-2</id>
    </interactant>
    <interactant intactId="EBI-7261162">
        <id>Q9UGU5</id>
        <label>HMGXB4</label>
    </interactant>
    <organismsDiffer>false</organismsDiffer>
    <experiments>3</experiments>
</comment>
<comment type="interaction">
    <interactant intactId="EBI-348567">
        <id>O75928-2</id>
    </interactant>
    <interactant intactId="EBI-1046507">
        <id>O60812</id>
        <label>HNRNPCL1</label>
    </interactant>
    <organismsDiffer>false</organismsDiffer>
    <experiments>3</experiments>
</comment>
<comment type="interaction">
    <interactant intactId="EBI-348567">
        <id>O75928-2</id>
    </interactant>
    <interactant intactId="EBI-1018153">
        <id>Q9BUJ2</id>
        <label>HNRNPUL1</label>
    </interactant>
    <organismsDiffer>false</organismsDiffer>
    <experiments>3</experiments>
</comment>
<comment type="interaction">
    <interactant intactId="EBI-348567">
        <id>O75928-2</id>
    </interactant>
    <interactant intactId="EBI-746815">
        <id>Q86YM7</id>
        <label>HOMER1</label>
    </interactant>
    <organismsDiffer>false</organismsDiffer>
    <experiments>3</experiments>
</comment>
<comment type="interaction">
    <interactant intactId="EBI-348567">
        <id>O75928-2</id>
    </interactant>
    <interactant intactId="EBI-746704">
        <id>Q9UJC3</id>
        <label>HOOK1</label>
    </interactant>
    <organismsDiffer>false</organismsDiffer>
    <experiments>3</experiments>
</comment>
<comment type="interaction">
    <interactant intactId="EBI-348567">
        <id>O75928-2</id>
    </interactant>
    <interactant intactId="EBI-11522367">
        <id>Q13422-7</id>
        <label>IKZF1</label>
    </interactant>
    <organismsDiffer>false</organismsDiffer>
    <experiments>3</experiments>
</comment>
<comment type="interaction">
    <interactant intactId="EBI-348567">
        <id>O75928-2</id>
    </interactant>
    <interactant intactId="EBI-12188657">
        <id>P20839-3</id>
        <label>IMPDH1</label>
    </interactant>
    <organismsDiffer>false</organismsDiffer>
    <experiments>3</experiments>
</comment>
<comment type="interaction">
    <interactant intactId="EBI-348567">
        <id>O75928-2</id>
    </interactant>
    <interactant intactId="EBI-14069005">
        <id>Q9BVG8-5</id>
        <label>KIFC3</label>
    </interactant>
    <organismsDiffer>false</organismsDiffer>
    <experiments>3</experiments>
</comment>
<comment type="interaction">
    <interactant intactId="EBI-348567">
        <id>O75928-2</id>
    </interactant>
    <interactant intactId="EBI-11955335">
        <id>Q5T753</id>
        <label>LCE1E</label>
    </interactant>
    <organismsDiffer>false</organismsDiffer>
    <experiments>3</experiments>
</comment>
<comment type="interaction">
    <interactant intactId="EBI-348567">
        <id>O75928-2</id>
    </interactant>
    <interactant intactId="EBI-11973993">
        <id>Q5TA81</id>
        <label>LCE2C</label>
    </interactant>
    <organismsDiffer>false</organismsDiffer>
    <experiments>3</experiments>
</comment>
<comment type="interaction">
    <interactant intactId="EBI-348567">
        <id>O75928-2</id>
    </interactant>
    <interactant intactId="EBI-8852072">
        <id>Q9UH92-3</id>
        <label>MLX</label>
    </interactant>
    <organismsDiffer>false</organismsDiffer>
    <experiments>3</experiments>
</comment>
<comment type="interaction">
    <interactant intactId="EBI-348567">
        <id>O75928-2</id>
    </interactant>
    <interactant intactId="EBI-929476">
        <id>P20591</id>
        <label>MX1</label>
    </interactant>
    <organismsDiffer>false</organismsDiffer>
    <experiments>3</experiments>
</comment>
<comment type="interaction">
    <interactant intactId="EBI-348567">
        <id>O75928-2</id>
    </interactant>
    <interactant intactId="EBI-744782">
        <id>Q9Y5B8</id>
        <label>NME7</label>
    </interactant>
    <organismsDiffer>false</organismsDiffer>
    <experiments>3</experiments>
</comment>
<comment type="interaction">
    <interactant intactId="EBI-348567">
        <id>O75928-2</id>
    </interactant>
    <interactant intactId="EBI-712261">
        <id>P22234</id>
        <label>PAICS</label>
    </interactant>
    <organismsDiffer>false</organismsDiffer>
    <experiments>3</experiments>
</comment>
<comment type="interaction">
    <interactant intactId="EBI-348567">
        <id>O75928-2</id>
    </interactant>
    <interactant intactId="EBI-713955">
        <id>O75569</id>
        <label>PRKRA</label>
    </interactant>
    <organismsDiffer>false</organismsDiffer>
    <experiments>3</experiments>
</comment>
<comment type="interaction">
    <interactant intactId="EBI-348567">
        <id>O75928-2</id>
    </interactant>
    <interactant intactId="EBI-752074">
        <id>P41219</id>
        <label>PRPH</label>
    </interactant>
    <organismsDiffer>false</organismsDiffer>
    <experiments>3</experiments>
</comment>
<comment type="interaction">
    <interactant intactId="EBI-348567">
        <id>O75928-2</id>
    </interactant>
    <interactant intactId="EBI-746731">
        <id>P48378</id>
        <label>RFX2</label>
    </interactant>
    <organismsDiffer>false</organismsDiffer>
    <experiments>3</experiments>
</comment>
<comment type="interaction">
    <interactant intactId="EBI-348567">
        <id>O75928-2</id>
    </interactant>
    <interactant intactId="EBI-11984663">
        <id>Q06455-2</id>
        <label>RUNX1T1</label>
    </interactant>
    <organismsDiffer>false</organismsDiffer>
    <experiments>5</experiments>
</comment>
<comment type="interaction">
    <interactant intactId="EBI-348567">
        <id>O75928-2</id>
    </interactant>
    <interactant intactId="EBI-81088">
        <id>Q15436</id>
        <label>SEC23A</label>
    </interactant>
    <organismsDiffer>false</organismsDiffer>
    <experiments>3</experiments>
</comment>
<comment type="interaction">
    <interactant intactId="EBI-348567">
        <id>O75928-2</id>
    </interactant>
    <interactant intactId="EBI-11954419">
        <id>P35711-4</id>
        <label>SOX5</label>
    </interactant>
    <organismsDiffer>false</organismsDiffer>
    <experiments>3</experiments>
</comment>
<comment type="interaction">
    <interactant intactId="EBI-348567">
        <id>O75928-2</id>
    </interactant>
    <interactant intactId="EBI-11995806">
        <id>Q9H0A9-2</id>
        <label>SPATC1L</label>
    </interactant>
    <organismsDiffer>false</organismsDiffer>
    <experiments>3</experiments>
</comment>
<comment type="interaction">
    <interactant intactId="EBI-348567">
        <id>O75928-2</id>
    </interactant>
    <interactant intactId="EBI-1773488">
        <id>Q9BUA3</id>
        <label>SPINDOC</label>
    </interactant>
    <organismsDiffer>false</organismsDiffer>
    <experiments>3</experiments>
</comment>
<comment type="interaction">
    <interactant intactId="EBI-348567">
        <id>O75928-2</id>
    </interactant>
    <interactant intactId="EBI-80140">
        <id>P63165</id>
        <label>SUMO1</label>
    </interactant>
    <organismsDiffer>false</organismsDiffer>
    <experiments>3</experiments>
</comment>
<comment type="interaction">
    <interactant intactId="EBI-348567">
        <id>O75928-2</id>
    </interactant>
    <interactant intactId="EBI-12820047">
        <id>Q17R54</id>
        <label>SYN3</label>
    </interactant>
    <organismsDiffer>false</organismsDiffer>
    <experiments>3</experiments>
</comment>
<comment type="interaction">
    <interactant intactId="EBI-348567">
        <id>O75928-2</id>
    </interactant>
    <interactant intactId="EBI-12001016">
        <id>P07101-3</id>
        <label>TH</label>
    </interactant>
    <organismsDiffer>false</organismsDiffer>
    <experiments>3</experiments>
</comment>
<comment type="interaction">
    <interactant intactId="EBI-348567">
        <id>O75928-2</id>
    </interactant>
    <interactant intactId="EBI-355744">
        <id>Q12933</id>
        <label>TRAF2</label>
    </interactant>
    <organismsDiffer>false</organismsDiffer>
    <experiments>3</experiments>
</comment>
<comment type="interaction">
    <interactant intactId="EBI-348567">
        <id>O75928-2</id>
    </interactant>
    <interactant intactId="EBI-357631">
        <id>Q13114</id>
        <label>TRAF3</label>
    </interactant>
    <organismsDiffer>false</organismsDiffer>
    <experiments>3</experiments>
</comment>
<comment type="interaction">
    <interactant intactId="EBI-348567">
        <id>O75928-2</id>
    </interactant>
    <interactant intactId="EBI-523498">
        <id>O00463</id>
        <label>TRAF5</label>
    </interactant>
    <organismsDiffer>false</organismsDiffer>
    <experiments>3</experiments>
</comment>
<comment type="interaction">
    <interactant intactId="EBI-348567">
        <id>O75928-2</id>
    </interactant>
    <interactant intactId="EBI-9867283">
        <id>Q86XT4</id>
        <label>TRIM50</label>
    </interactant>
    <organismsDiffer>false</organismsDiffer>
    <experiments>3</experiments>
</comment>
<comment type="interaction">
    <interactant intactId="EBI-348567">
        <id>O75928-2</id>
    </interactant>
    <interactant intactId="EBI-746981">
        <id>Q969E8</id>
        <label>TSR2</label>
    </interactant>
    <organismsDiffer>false</organismsDiffer>
    <experiments>3</experiments>
</comment>
<comment type="interaction">
    <interactant intactId="EBI-348567">
        <id>O75928-2</id>
    </interactant>
    <interactant intactId="EBI-359793">
        <id>P40222</id>
        <label>TXLNA</label>
    </interactant>
    <organismsDiffer>false</organismsDiffer>
    <experiments>3</experiments>
</comment>
<comment type="interaction">
    <interactant intactId="EBI-348567">
        <id>O75928-2</id>
    </interactant>
    <interactant intactId="EBI-1380492">
        <id>Q8TF42</id>
        <label>UBASH3B</label>
    </interactant>
    <organismsDiffer>false</organismsDiffer>
    <experiments>3</experiments>
</comment>
<comment type="interaction">
    <interactant intactId="EBI-348567">
        <id>O75928-2</id>
    </interactant>
    <interactant intactId="EBI-10180829">
        <id>Q7KZS0</id>
        <label>UBE2I</label>
    </interactant>
    <organismsDiffer>false</organismsDiffer>
    <experiments>3</experiments>
</comment>
<comment type="interaction">
    <interactant intactId="EBI-348567">
        <id>O75928-2</id>
    </interactant>
    <interactant intactId="EBI-741480">
        <id>Q9UMX0</id>
        <label>UBQLN1</label>
    </interactant>
    <organismsDiffer>false</organismsDiffer>
    <experiments>3</experiments>
</comment>
<comment type="interaction">
    <interactant intactId="EBI-348567">
        <id>O75928-2</id>
    </interactant>
    <interactant intactId="EBI-711925">
        <id>Q05516</id>
        <label>ZBTB16</label>
    </interactant>
    <organismsDiffer>false</organismsDiffer>
    <experiments>3</experiments>
</comment>
<comment type="interaction">
    <interactant intactId="EBI-348567">
        <id>O75928-2</id>
    </interactant>
    <interactant intactId="EBI-742550">
        <id>Q96K80</id>
        <label>ZC3H10</label>
    </interactant>
    <organismsDiffer>false</organismsDiffer>
    <experiments>3</experiments>
</comment>
<comment type="interaction">
    <interactant intactId="EBI-348567">
        <id>O75928-2</id>
    </interactant>
    <interactant intactId="EBI-12151755">
        <id>Q96MM3</id>
        <label>ZFP42</label>
    </interactant>
    <organismsDiffer>false</organismsDiffer>
    <experiments>3</experiments>
</comment>
<comment type="interaction">
    <interactant intactId="EBI-348567">
        <id>O75928-2</id>
    </interactant>
    <interactant intactId="EBI-11993110">
        <id>Q9P2F9</id>
        <label>ZNF319</label>
    </interactant>
    <organismsDiffer>false</organismsDiffer>
    <experiments>3</experiments>
</comment>
<comment type="interaction">
    <interactant intactId="EBI-348567">
        <id>O75928-2</id>
    </interactant>
    <interactant intactId="EBI-741415">
        <id>O60232</id>
        <label>ZNRD2</label>
    </interactant>
    <organismsDiffer>false</organismsDiffer>
    <experiments>3</experiments>
</comment>
<comment type="subcellular location">
    <subcellularLocation>
        <location evidence="2">Nucleus speckle</location>
    </subcellularLocation>
    <subcellularLocation>
        <location evidence="13 21">Nucleus</location>
        <location evidence="13 21">PML body</location>
    </subcellularLocation>
    <subcellularLocation>
        <location evidence="9 12">Nucleus</location>
    </subcellularLocation>
    <text evidence="2 21">Colocalizes at least partially with promyelocytic leukemia nuclear bodies (PML NBs) (PubMed:22406621). Colocalizes with SUMO1 in nuclear granules (By similarity).</text>
</comment>
<comment type="alternative products">
    <event type="alternative splicing"/>
    <isoform>
        <id>O75928-1</id>
        <name>PIAS2-beta</name>
        <name>PIASx-beta</name>
        <name>Miz1</name>
        <sequence type="displayed"/>
    </isoform>
    <isoform>
        <id>O75928-2</id>
        <name>PIAS2-alpha</name>
        <name>PIASx-alpha</name>
        <name>ARIP3</name>
        <sequence type="described" ref="VSP_050008 VSP_050009"/>
    </isoform>
    <isoform>
        <id>O75928-3</id>
        <name>3</name>
        <sequence type="described" ref="VSP_012196 VSP_012197"/>
    </isoform>
</comment>
<comment type="tissue specificity">
    <text evidence="8 15 23">Mainly expressed in testis. Isoform 3 is expressed predominantly in adult testis, weakly in pancreas, embryonic testis and sperm, and at very low levels in other organs.</text>
</comment>
<comment type="developmental stage">
    <text evidence="15">Isoform 3 expression in adult testis is 14.2-fold stronger than in embryonic testis.</text>
</comment>
<comment type="induction">
    <text>Up-regulated transiently during myeloid differentiation in various cells lines, such as HL-60, U-937, K-562, induced by either phorbol ester (TPA) or retinoic acid.</text>
</comment>
<comment type="domain">
    <text>The LXXLL motif is a transcriptional coregulator signature.</text>
</comment>
<comment type="PTM">
    <text evidence="10 12">Sumoylated.</text>
</comment>
<comment type="similarity">
    <text evidence="27">Belongs to the PIAS family.</text>
</comment>
<protein>
    <recommendedName>
        <fullName>E3 SUMO-protein ligase PIAS2</fullName>
        <ecNumber>2.3.2.-</ecNumber>
    </recommendedName>
    <alternativeName>
        <fullName>Androgen receptor-interacting protein 3</fullName>
        <shortName>ARIP3</shortName>
    </alternativeName>
    <alternativeName>
        <fullName>DAB2-interacting protein</fullName>
        <shortName>DIP</shortName>
    </alternativeName>
    <alternativeName>
        <fullName evidence="27">E3 SUMO-protein transferase PIAS2</fullName>
    </alternativeName>
    <alternativeName>
        <fullName>Msx-interacting zinc finger protein</fullName>
        <shortName>Miz1</shortName>
    </alternativeName>
    <alternativeName>
        <fullName>PIAS-NY protein</fullName>
    </alternativeName>
    <alternativeName>
        <fullName>Protein inhibitor of activated STAT x</fullName>
    </alternativeName>
    <alternativeName>
        <fullName>Protein inhibitor of activated STAT2</fullName>
    </alternativeName>
</protein>